<reference key="1">
    <citation type="journal article" date="2011" name="Stand. Genomic Sci.">
        <title>Complete genome sequence of Parvibaculum lavamentivorans type strain (DS-1(T)).</title>
        <authorList>
            <person name="Schleheck D."/>
            <person name="Weiss M."/>
            <person name="Pitluck S."/>
            <person name="Bruce D."/>
            <person name="Land M.L."/>
            <person name="Han S."/>
            <person name="Saunders E."/>
            <person name="Tapia R."/>
            <person name="Detter C."/>
            <person name="Brettin T."/>
            <person name="Han J."/>
            <person name="Woyke T."/>
            <person name="Goodwin L."/>
            <person name="Pennacchio L."/>
            <person name="Nolan M."/>
            <person name="Cook A.M."/>
            <person name="Kjelleberg S."/>
            <person name="Thomas T."/>
        </authorList>
    </citation>
    <scope>NUCLEOTIDE SEQUENCE [LARGE SCALE GENOMIC DNA]</scope>
    <source>
        <strain>DS-1 / DSM 13023 / NCIMB 13966</strain>
    </source>
</reference>
<dbReference type="EC" id="6.3.2.4" evidence="2"/>
<dbReference type="EMBL" id="CP000774">
    <property type="protein sequence ID" value="ABS64033.1"/>
    <property type="molecule type" value="Genomic_DNA"/>
</dbReference>
<dbReference type="RefSeq" id="WP_012111342.1">
    <property type="nucleotide sequence ID" value="NC_009719.1"/>
</dbReference>
<dbReference type="SMR" id="A7HVV0"/>
<dbReference type="STRING" id="402881.Plav_2424"/>
<dbReference type="KEGG" id="pla:Plav_2424"/>
<dbReference type="eggNOG" id="COG1181">
    <property type="taxonomic scope" value="Bacteria"/>
</dbReference>
<dbReference type="HOGENOM" id="CLU_039268_1_1_5"/>
<dbReference type="OrthoDB" id="9813261at2"/>
<dbReference type="UniPathway" id="UPA00219"/>
<dbReference type="Proteomes" id="UP000006377">
    <property type="component" value="Chromosome"/>
</dbReference>
<dbReference type="GO" id="GO:0005737">
    <property type="term" value="C:cytoplasm"/>
    <property type="evidence" value="ECO:0007669"/>
    <property type="project" value="UniProtKB-SubCell"/>
</dbReference>
<dbReference type="GO" id="GO:0005524">
    <property type="term" value="F:ATP binding"/>
    <property type="evidence" value="ECO:0007669"/>
    <property type="project" value="UniProtKB-KW"/>
</dbReference>
<dbReference type="GO" id="GO:0008716">
    <property type="term" value="F:D-alanine-D-alanine ligase activity"/>
    <property type="evidence" value="ECO:0007669"/>
    <property type="project" value="UniProtKB-UniRule"/>
</dbReference>
<dbReference type="GO" id="GO:0046872">
    <property type="term" value="F:metal ion binding"/>
    <property type="evidence" value="ECO:0007669"/>
    <property type="project" value="UniProtKB-KW"/>
</dbReference>
<dbReference type="GO" id="GO:0071555">
    <property type="term" value="P:cell wall organization"/>
    <property type="evidence" value="ECO:0007669"/>
    <property type="project" value="UniProtKB-KW"/>
</dbReference>
<dbReference type="GO" id="GO:0009252">
    <property type="term" value="P:peptidoglycan biosynthetic process"/>
    <property type="evidence" value="ECO:0007669"/>
    <property type="project" value="UniProtKB-UniRule"/>
</dbReference>
<dbReference type="GO" id="GO:0008360">
    <property type="term" value="P:regulation of cell shape"/>
    <property type="evidence" value="ECO:0007669"/>
    <property type="project" value="UniProtKB-KW"/>
</dbReference>
<dbReference type="Gene3D" id="3.40.50.20">
    <property type="match status" value="1"/>
</dbReference>
<dbReference type="Gene3D" id="3.30.1490.20">
    <property type="entry name" value="ATP-grasp fold, A domain"/>
    <property type="match status" value="1"/>
</dbReference>
<dbReference type="Gene3D" id="3.30.470.20">
    <property type="entry name" value="ATP-grasp fold, B domain"/>
    <property type="match status" value="1"/>
</dbReference>
<dbReference type="HAMAP" id="MF_00047">
    <property type="entry name" value="Dala_Dala_lig"/>
    <property type="match status" value="1"/>
</dbReference>
<dbReference type="InterPro" id="IPR011761">
    <property type="entry name" value="ATP-grasp"/>
</dbReference>
<dbReference type="InterPro" id="IPR013815">
    <property type="entry name" value="ATP_grasp_subdomain_1"/>
</dbReference>
<dbReference type="InterPro" id="IPR000291">
    <property type="entry name" value="D-Ala_lig_Van_CS"/>
</dbReference>
<dbReference type="InterPro" id="IPR005905">
    <property type="entry name" value="D_ala_D_ala"/>
</dbReference>
<dbReference type="InterPro" id="IPR011095">
    <property type="entry name" value="Dala_Dala_lig_C"/>
</dbReference>
<dbReference type="InterPro" id="IPR011127">
    <property type="entry name" value="Dala_Dala_lig_N"/>
</dbReference>
<dbReference type="InterPro" id="IPR016185">
    <property type="entry name" value="PreATP-grasp_dom_sf"/>
</dbReference>
<dbReference type="NCBIfam" id="TIGR01205">
    <property type="entry name" value="D_ala_D_alaTIGR"/>
    <property type="match status" value="1"/>
</dbReference>
<dbReference type="NCBIfam" id="NF002378">
    <property type="entry name" value="PRK01372.1"/>
    <property type="match status" value="1"/>
</dbReference>
<dbReference type="PANTHER" id="PTHR23132">
    <property type="entry name" value="D-ALANINE--D-ALANINE LIGASE"/>
    <property type="match status" value="1"/>
</dbReference>
<dbReference type="PANTHER" id="PTHR23132:SF23">
    <property type="entry name" value="D-ALANINE--D-ALANINE LIGASE B"/>
    <property type="match status" value="1"/>
</dbReference>
<dbReference type="Pfam" id="PF07478">
    <property type="entry name" value="Dala_Dala_lig_C"/>
    <property type="match status" value="1"/>
</dbReference>
<dbReference type="Pfam" id="PF01820">
    <property type="entry name" value="Dala_Dala_lig_N"/>
    <property type="match status" value="1"/>
</dbReference>
<dbReference type="PIRSF" id="PIRSF039102">
    <property type="entry name" value="Ddl/VanB"/>
    <property type="match status" value="1"/>
</dbReference>
<dbReference type="SUPFAM" id="SSF56059">
    <property type="entry name" value="Glutathione synthetase ATP-binding domain-like"/>
    <property type="match status" value="1"/>
</dbReference>
<dbReference type="SUPFAM" id="SSF52440">
    <property type="entry name" value="PreATP-grasp domain"/>
    <property type="match status" value="1"/>
</dbReference>
<dbReference type="PROSITE" id="PS50975">
    <property type="entry name" value="ATP_GRASP"/>
    <property type="match status" value="1"/>
</dbReference>
<dbReference type="PROSITE" id="PS00843">
    <property type="entry name" value="DALA_DALA_LIGASE_1"/>
    <property type="match status" value="1"/>
</dbReference>
<dbReference type="PROSITE" id="PS00844">
    <property type="entry name" value="DALA_DALA_LIGASE_2"/>
    <property type="match status" value="1"/>
</dbReference>
<accession>A7HVV0</accession>
<name>DDL_PARL1</name>
<protein>
    <recommendedName>
        <fullName evidence="2">D-alanine--D-alanine ligase</fullName>
        <ecNumber evidence="2">6.3.2.4</ecNumber>
    </recommendedName>
    <alternativeName>
        <fullName evidence="2">D-Ala-D-Ala ligase</fullName>
    </alternativeName>
    <alternativeName>
        <fullName evidence="2">D-alanylalanine synthetase</fullName>
    </alternativeName>
</protein>
<organism>
    <name type="scientific">Parvibaculum lavamentivorans (strain DS-1 / DSM 13023 / NCIMB 13966)</name>
    <dbReference type="NCBI Taxonomy" id="402881"/>
    <lineage>
        <taxon>Bacteria</taxon>
        <taxon>Pseudomonadati</taxon>
        <taxon>Pseudomonadota</taxon>
        <taxon>Alphaproteobacteria</taxon>
        <taxon>Hyphomicrobiales</taxon>
        <taxon>Parvibaculaceae</taxon>
        <taxon>Parvibaculum</taxon>
    </lineage>
</organism>
<gene>
    <name evidence="2" type="primary">ddl</name>
    <name type="ordered locus">Plav_2424</name>
</gene>
<sequence>MSQAKHVAVLKGGWSAEREVSLVSGKGCAEALRKHGYRVTEIDAGRDLADQILKVKPDVAFNALHGRWGEDGCVQGLLEILRVPYTHSGVLASALAMHKERAKFVFRAAGLPVAESVVVPREQAAHGHVMDPPYVIKPVSEGSSVGVFIVRAGDNRPPAELTSAEWNLGDEVMAERYIAGRELTCAVMGEEIFGVTEIIANTTFYDYEAKYQTGGSRHIIPAPIDADIYAEVQRVTLAAHKALGCRGVSRADFRFDDTRPGKPELILLEVNTQPGMTPTSLVPELANLAGYSYGELVSWMVEEASCDR</sequence>
<evidence type="ECO:0000250" key="1"/>
<evidence type="ECO:0000255" key="2">
    <source>
        <dbReference type="HAMAP-Rule" id="MF_00047"/>
    </source>
</evidence>
<keyword id="KW-0067">ATP-binding</keyword>
<keyword id="KW-0133">Cell shape</keyword>
<keyword id="KW-0961">Cell wall biogenesis/degradation</keyword>
<keyword id="KW-0963">Cytoplasm</keyword>
<keyword id="KW-0436">Ligase</keyword>
<keyword id="KW-0460">Magnesium</keyword>
<keyword id="KW-0464">Manganese</keyword>
<keyword id="KW-0479">Metal-binding</keyword>
<keyword id="KW-0547">Nucleotide-binding</keyword>
<keyword id="KW-0573">Peptidoglycan synthesis</keyword>
<keyword id="KW-1185">Reference proteome</keyword>
<proteinExistence type="inferred from homology"/>
<comment type="function">
    <text evidence="2">Cell wall formation.</text>
</comment>
<comment type="catalytic activity">
    <reaction evidence="2">
        <text>2 D-alanine + ATP = D-alanyl-D-alanine + ADP + phosphate + H(+)</text>
        <dbReference type="Rhea" id="RHEA:11224"/>
        <dbReference type="ChEBI" id="CHEBI:15378"/>
        <dbReference type="ChEBI" id="CHEBI:30616"/>
        <dbReference type="ChEBI" id="CHEBI:43474"/>
        <dbReference type="ChEBI" id="CHEBI:57416"/>
        <dbReference type="ChEBI" id="CHEBI:57822"/>
        <dbReference type="ChEBI" id="CHEBI:456216"/>
        <dbReference type="EC" id="6.3.2.4"/>
    </reaction>
</comment>
<comment type="cofactor">
    <cofactor evidence="1">
        <name>Mg(2+)</name>
        <dbReference type="ChEBI" id="CHEBI:18420"/>
    </cofactor>
    <cofactor evidence="1">
        <name>Mn(2+)</name>
        <dbReference type="ChEBI" id="CHEBI:29035"/>
    </cofactor>
    <text evidence="1">Binds 2 magnesium or manganese ions per subunit.</text>
</comment>
<comment type="pathway">
    <text evidence="2">Cell wall biogenesis; peptidoglycan biosynthesis.</text>
</comment>
<comment type="subcellular location">
    <subcellularLocation>
        <location evidence="2">Cytoplasm</location>
    </subcellularLocation>
</comment>
<comment type="similarity">
    <text evidence="2">Belongs to the D-alanine--D-alanine ligase family.</text>
</comment>
<feature type="chain" id="PRO_0000341144" description="D-alanine--D-alanine ligase">
    <location>
        <begin position="1"/>
        <end position="308"/>
    </location>
</feature>
<feature type="domain" description="ATP-grasp" evidence="2">
    <location>
        <begin position="103"/>
        <end position="302"/>
    </location>
</feature>
<feature type="binding site" evidence="2">
    <location>
        <begin position="130"/>
        <end position="184"/>
    </location>
    <ligand>
        <name>ATP</name>
        <dbReference type="ChEBI" id="CHEBI:30616"/>
    </ligand>
</feature>
<feature type="binding site" evidence="2">
    <location>
        <position position="252"/>
    </location>
    <ligand>
        <name>Mg(2+)</name>
        <dbReference type="ChEBI" id="CHEBI:18420"/>
        <label>1</label>
    </ligand>
</feature>
<feature type="binding site" evidence="2">
    <location>
        <position position="269"/>
    </location>
    <ligand>
        <name>Mg(2+)</name>
        <dbReference type="ChEBI" id="CHEBI:18420"/>
        <label>1</label>
    </ligand>
</feature>
<feature type="binding site" evidence="2">
    <location>
        <position position="269"/>
    </location>
    <ligand>
        <name>Mg(2+)</name>
        <dbReference type="ChEBI" id="CHEBI:18420"/>
        <label>2</label>
    </ligand>
</feature>
<feature type="binding site" evidence="2">
    <location>
        <position position="271"/>
    </location>
    <ligand>
        <name>Mg(2+)</name>
        <dbReference type="ChEBI" id="CHEBI:18420"/>
        <label>2</label>
    </ligand>
</feature>